<comment type="function">
    <text evidence="2">Tyrosine-rich conopeptide that specifically targets voltage-gated potassium channel Kv1.6/KCNA6 (IC(50) is 8.8 uM) that is expressed in Xenopus oocytes. In vivo, causes seizures (at 5 nmol) and death (20 nmol) when intracranially injected into mice, and causes paralysis (at 10 pmol) to C.elegans.</text>
</comment>
<comment type="subcellular location">
    <subcellularLocation>
        <location>Secreted</location>
    </subcellularLocation>
</comment>
<comment type="tissue specificity">
    <text>Expressed by the venom duct.</text>
</comment>
<comment type="mass spectrometry"/>
<comment type="toxic dose">
    <text evidence="2">Dose that causes mild to moderate seizure (ED(50)) is 5 nmol when intracranially injected into mice. With 20 nmol injected per mouse, most of the mice developed severe seizures and died.</text>
</comment>
<comment type="miscellaneous">
    <text>The mature peptide does not contain cysteine residues.</text>
</comment>
<comment type="miscellaneous">
    <text evidence="4">Negative results: does not inhibit Kv1.2/KCNA2 (IC(50) is &gt;30 uM), Kv1.3/KCNA3 (IC(50) is &gt;50 uM), Kv1.4/KCNA4 (IC(50) is &gt;50 uM), Kv1.5/KCNA5 (IC(50) is &gt;50 uM). Also seems to be ineffective on Kv1.1/KCNA2, Kv2.1/KCNB1, Kv3.4/KCNC4, and Nav1.2/SCN2A (PubMed:18505731).</text>
</comment>
<comment type="similarity">
    <text evidence="3">Belongs to the conotoxin M superfamily. Conopeptide Y family.</text>
</comment>
<keyword id="KW-0903">Direct protein sequencing</keyword>
<keyword id="KW-0872">Ion channel impairing toxin</keyword>
<keyword id="KW-0528">Neurotoxin</keyword>
<keyword id="KW-0632">Potassium channel impairing toxin</keyword>
<keyword id="KW-0964">Secreted</keyword>
<keyword id="KW-0732">Signal</keyword>
<keyword id="KW-0800">Toxin</keyword>
<keyword id="KW-1220">Voltage-gated potassium channel impairing toxin</keyword>
<name>CPY1_CONFR</name>
<reference key="1">
    <citation type="journal article" date="2008" name="J. Biol. Chem.">
        <title>Tyrosine-rich conopeptides affect voltage-gated K+ channels.</title>
        <authorList>
            <person name="Imperial J.S."/>
            <person name="Chen P."/>
            <person name="Sporning A."/>
            <person name="Terlau H."/>
            <person name="Daly N.L."/>
            <person name="Craik D.J."/>
            <person name="Alewood P.F."/>
            <person name="Olivera B.M."/>
        </authorList>
    </citation>
    <scope>NUCLEOTIDE SEQUENCE [MRNA]</scope>
    <scope>PROTEIN SEQUENCE OF 40-69</scope>
    <scope>SYNTHESIS OF 40-69</scope>
    <scope>FUNCTION</scope>
    <scope>BIOASSAY</scope>
    <scope>TOXIC DOSE</scope>
    <scope>MASS SPECTROMETRY</scope>
    <source>
        <tissue>Venom</tissue>
        <tissue>Venom duct</tissue>
    </source>
</reference>
<organism>
    <name type="scientific">Conus ferrugineus</name>
    <name type="common">Cone snail</name>
    <dbReference type="NCBI Taxonomy" id="379542"/>
    <lineage>
        <taxon>Eukaryota</taxon>
        <taxon>Metazoa</taxon>
        <taxon>Spiralia</taxon>
        <taxon>Lophotrochozoa</taxon>
        <taxon>Mollusca</taxon>
        <taxon>Gastropoda</taxon>
        <taxon>Caenogastropoda</taxon>
        <taxon>Neogastropoda</taxon>
        <taxon>Conoidea</taxon>
        <taxon>Conidae</taxon>
        <taxon>Conus</taxon>
        <taxon>Strategoconus</taxon>
    </lineage>
</organism>
<evidence type="ECO:0000255" key="1"/>
<evidence type="ECO:0000269" key="2">
    <source>
    </source>
</evidence>
<evidence type="ECO:0000305" key="3"/>
<evidence type="ECO:0000305" key="4">
    <source>
    </source>
</evidence>
<dbReference type="EMBL" id="EU000529">
    <property type="protein sequence ID" value="ABV74050.1"/>
    <property type="molecule type" value="mRNA"/>
</dbReference>
<dbReference type="GO" id="GO:0005576">
    <property type="term" value="C:extracellular region"/>
    <property type="evidence" value="ECO:0007669"/>
    <property type="project" value="UniProtKB-SubCell"/>
</dbReference>
<dbReference type="GO" id="GO:0008200">
    <property type="term" value="F:ion channel inhibitor activity"/>
    <property type="evidence" value="ECO:0007669"/>
    <property type="project" value="InterPro"/>
</dbReference>
<dbReference type="GO" id="GO:0015459">
    <property type="term" value="F:potassium channel regulator activity"/>
    <property type="evidence" value="ECO:0007669"/>
    <property type="project" value="UniProtKB-KW"/>
</dbReference>
<dbReference type="GO" id="GO:0090729">
    <property type="term" value="F:toxin activity"/>
    <property type="evidence" value="ECO:0007669"/>
    <property type="project" value="UniProtKB-KW"/>
</dbReference>
<dbReference type="InterPro" id="IPR004214">
    <property type="entry name" value="Conotoxin"/>
</dbReference>
<dbReference type="Pfam" id="PF02950">
    <property type="entry name" value="Conotoxin"/>
    <property type="match status" value="1"/>
</dbReference>
<proteinExistence type="evidence at protein level"/>
<accession>B3SVF1</accession>
<protein>
    <recommendedName>
        <fullName>Conopeptide Y-Fe1</fullName>
    </recommendedName>
    <alternativeName>
        <fullName>CPY-Fe1</fullName>
    </alternativeName>
</protein>
<feature type="signal peptide" evidence="1">
    <location>
        <begin position="1"/>
        <end position="20"/>
    </location>
</feature>
<feature type="propeptide" id="PRO_5000379124">
    <location>
        <begin position="21"/>
        <end position="69"/>
    </location>
</feature>
<feature type="peptide" id="PRO_5000379125" description="Conopeptide Y-Fe1">
    <location>
        <begin position="40"/>
        <end position="69"/>
    </location>
</feature>
<sequence>MSKLGVVLFVFLLLLPLAAPQPVGDQPADQPADRNAEARGTYLYPFSYYRLWRYFTRFLHKQPYYYVHI</sequence>